<sequence length="266" mass="29301">MVTTLSYTERASHPSPLAKRLFSLMESKKTNLCASVDVRTTEELLKLVDTLGPYICLLKTHIDIIDDFSMESTVAPLLELSKEHNFLIFEDRKFADIGNTVKAQYAGGAFKIAQWADITNAHGVTGRGIVKGLKEAAQETTDEPRGLLMLAELSSKGSFAHGTYTEETVEIAKTDKDFCIGFIAQRDMGGREDGFDWIIMTPGVGLDDKGDSLGQQYRTVDEVVSGGCDIIIVGRGLFGKGRDPTVEGERYRKAGWDAYLKRYSAQ</sequence>
<gene>
    <name type="primary">URA3</name>
</gene>
<reference key="1">
    <citation type="journal article" date="1998" name="Yeast">
        <title>Isolation and sequence analysis of the orotidine-5'-phosphate decarboxylase gene (URA3) of Candida utilis. Comparison with the OMP decarboxylase gene family.</title>
        <authorList>
            <person name="Rodriguez L."/>
            <person name="Chavez F.P."/>
            <person name="Gonzalez M.E."/>
            <person name="Basabe L."/>
            <person name="Rivero T."/>
        </authorList>
    </citation>
    <scope>NUCLEOTIDE SEQUENCE [GENOMIC DNA]</scope>
    <source>
        <strain>ATCC 9256 / CBS 841 / DSM 70167 / JCM 2311 / NBRC 0626 / NRRL Y-1084 / VKM Y-768</strain>
    </source>
</reference>
<keyword id="KW-0210">Decarboxylase</keyword>
<keyword id="KW-0456">Lyase</keyword>
<keyword id="KW-0665">Pyrimidine biosynthesis</keyword>
<organism>
    <name type="scientific">Cyberlindnera jadinii</name>
    <name type="common">Torula yeast</name>
    <name type="synonym">Pichia jadinii</name>
    <dbReference type="NCBI Taxonomy" id="4903"/>
    <lineage>
        <taxon>Eukaryota</taxon>
        <taxon>Fungi</taxon>
        <taxon>Dikarya</taxon>
        <taxon>Ascomycota</taxon>
        <taxon>Saccharomycotina</taxon>
        <taxon>Saccharomycetes</taxon>
        <taxon>Phaffomycetales</taxon>
        <taxon>Phaffomycetaceae</taxon>
        <taxon>Cyberlindnera</taxon>
    </lineage>
</organism>
<protein>
    <recommendedName>
        <fullName>Orotidine 5'-phosphate decarboxylase</fullName>
        <ecNumber>4.1.1.23</ecNumber>
    </recommendedName>
    <alternativeName>
        <fullName>OMP decarboxylase</fullName>
        <shortName>OMPDCase</shortName>
        <shortName>OMPdecase</shortName>
    </alternativeName>
    <alternativeName>
        <fullName>Uridine 5'-monophosphate synthase</fullName>
        <shortName>UMP synthase</shortName>
    </alternativeName>
</protein>
<comment type="catalytic activity">
    <reaction evidence="2">
        <text>orotidine 5'-phosphate + H(+) = UMP + CO2</text>
        <dbReference type="Rhea" id="RHEA:11596"/>
        <dbReference type="ChEBI" id="CHEBI:15378"/>
        <dbReference type="ChEBI" id="CHEBI:16526"/>
        <dbReference type="ChEBI" id="CHEBI:57538"/>
        <dbReference type="ChEBI" id="CHEBI:57865"/>
        <dbReference type="EC" id="4.1.1.23"/>
    </reaction>
</comment>
<comment type="pathway">
    <text>Pyrimidine metabolism; UMP biosynthesis via de novo pathway; UMP from orotate: step 2/2.</text>
</comment>
<comment type="similarity">
    <text evidence="3">Belongs to the OMP decarboxylase family.</text>
</comment>
<evidence type="ECO:0000250" key="1"/>
<evidence type="ECO:0000255" key="2">
    <source>
        <dbReference type="PROSITE-ProRule" id="PRU10110"/>
    </source>
</evidence>
<evidence type="ECO:0000305" key="3"/>
<accession>O94127</accession>
<feature type="chain" id="PRO_0000134673" description="Orotidine 5'-phosphate decarboxylase">
    <location>
        <begin position="1"/>
        <end position="266"/>
    </location>
</feature>
<feature type="active site" description="Proton donor" evidence="2">
    <location>
        <position position="93"/>
    </location>
</feature>
<feature type="binding site" evidence="1">
    <location>
        <position position="37"/>
    </location>
    <ligand>
        <name>substrate</name>
    </ligand>
</feature>
<feature type="binding site" evidence="1">
    <location>
        <begin position="59"/>
        <end position="61"/>
    </location>
    <ligand>
        <name>substrate</name>
    </ligand>
</feature>
<feature type="binding site" evidence="1">
    <location>
        <begin position="91"/>
        <end position="100"/>
    </location>
    <ligand>
        <name>substrate</name>
    </ligand>
</feature>
<feature type="binding site" evidence="1">
    <location>
        <position position="217"/>
    </location>
    <ligand>
        <name>substrate</name>
    </ligand>
</feature>
<feature type="binding site" evidence="1">
    <location>
        <position position="235"/>
    </location>
    <ligand>
        <name>substrate</name>
    </ligand>
</feature>
<proteinExistence type="inferred from homology"/>
<name>PYRF_CYBJA</name>
<dbReference type="EC" id="4.1.1.23"/>
<dbReference type="EMBL" id="Y12660">
    <property type="protein sequence ID" value="CAA73209.1"/>
    <property type="molecule type" value="Genomic_DNA"/>
</dbReference>
<dbReference type="SMR" id="O94127"/>
<dbReference type="UniPathway" id="UPA00070">
    <property type="reaction ID" value="UER00120"/>
</dbReference>
<dbReference type="GO" id="GO:0005829">
    <property type="term" value="C:cytosol"/>
    <property type="evidence" value="ECO:0007669"/>
    <property type="project" value="TreeGrafter"/>
</dbReference>
<dbReference type="GO" id="GO:0004590">
    <property type="term" value="F:orotidine-5'-phosphate decarboxylase activity"/>
    <property type="evidence" value="ECO:0007669"/>
    <property type="project" value="UniProtKB-EC"/>
</dbReference>
<dbReference type="GO" id="GO:0006207">
    <property type="term" value="P:'de novo' pyrimidine nucleobase biosynthetic process"/>
    <property type="evidence" value="ECO:0007669"/>
    <property type="project" value="InterPro"/>
</dbReference>
<dbReference type="GO" id="GO:0044205">
    <property type="term" value="P:'de novo' UMP biosynthetic process"/>
    <property type="evidence" value="ECO:0007669"/>
    <property type="project" value="UniProtKB-UniPathway"/>
</dbReference>
<dbReference type="CDD" id="cd04725">
    <property type="entry name" value="OMP_decarboxylase_like"/>
    <property type="match status" value="1"/>
</dbReference>
<dbReference type="FunFam" id="3.20.20.70:FF:000114">
    <property type="entry name" value="Decarboxylase,orotidine phosphate"/>
    <property type="match status" value="1"/>
</dbReference>
<dbReference type="Gene3D" id="3.20.20.70">
    <property type="entry name" value="Aldolase class I"/>
    <property type="match status" value="1"/>
</dbReference>
<dbReference type="InterPro" id="IPR013785">
    <property type="entry name" value="Aldolase_TIM"/>
</dbReference>
<dbReference type="InterPro" id="IPR014732">
    <property type="entry name" value="OMPdecase"/>
</dbReference>
<dbReference type="InterPro" id="IPR018089">
    <property type="entry name" value="OMPdecase_AS"/>
</dbReference>
<dbReference type="InterPro" id="IPR001754">
    <property type="entry name" value="OMPdeCOase_dom"/>
</dbReference>
<dbReference type="InterPro" id="IPR011060">
    <property type="entry name" value="RibuloseP-bd_barrel"/>
</dbReference>
<dbReference type="NCBIfam" id="TIGR01740">
    <property type="entry name" value="pyrF"/>
    <property type="match status" value="1"/>
</dbReference>
<dbReference type="PANTHER" id="PTHR32119">
    <property type="entry name" value="OROTIDINE 5'-PHOSPHATE DECARBOXYLASE"/>
    <property type="match status" value="1"/>
</dbReference>
<dbReference type="PANTHER" id="PTHR32119:SF2">
    <property type="entry name" value="OROTIDINE 5'-PHOSPHATE DECARBOXYLASE"/>
    <property type="match status" value="1"/>
</dbReference>
<dbReference type="Pfam" id="PF00215">
    <property type="entry name" value="OMPdecase"/>
    <property type="match status" value="1"/>
</dbReference>
<dbReference type="SMART" id="SM00934">
    <property type="entry name" value="OMPdecase"/>
    <property type="match status" value="1"/>
</dbReference>
<dbReference type="SUPFAM" id="SSF51366">
    <property type="entry name" value="Ribulose-phoshate binding barrel"/>
    <property type="match status" value="1"/>
</dbReference>
<dbReference type="PROSITE" id="PS00156">
    <property type="entry name" value="OMPDECASE"/>
    <property type="match status" value="1"/>
</dbReference>